<proteinExistence type="evidence at transcript level"/>
<organism>
    <name type="scientific">Mus musculus</name>
    <name type="common">Mouse</name>
    <dbReference type="NCBI Taxonomy" id="10090"/>
    <lineage>
        <taxon>Eukaryota</taxon>
        <taxon>Metazoa</taxon>
        <taxon>Chordata</taxon>
        <taxon>Craniata</taxon>
        <taxon>Vertebrata</taxon>
        <taxon>Euteleostomi</taxon>
        <taxon>Mammalia</taxon>
        <taxon>Eutheria</taxon>
        <taxon>Euarchontoglires</taxon>
        <taxon>Glires</taxon>
        <taxon>Rodentia</taxon>
        <taxon>Myomorpha</taxon>
        <taxon>Muroidea</taxon>
        <taxon>Muridae</taxon>
        <taxon>Murinae</taxon>
        <taxon>Mus</taxon>
        <taxon>Mus</taxon>
    </lineage>
</organism>
<keyword id="KW-0175">Coiled coil</keyword>
<keyword id="KW-0963">Cytoplasm</keyword>
<keyword id="KW-0206">Cytoskeleton</keyword>
<keyword id="KW-0479">Metal-binding</keyword>
<keyword id="KW-0493">Microtubule</keyword>
<keyword id="KW-0597">Phosphoprotein</keyword>
<keyword id="KW-1185">Reference proteome</keyword>
<keyword id="KW-0677">Repeat</keyword>
<keyword id="KW-0808">Transferase</keyword>
<keyword id="KW-0833">Ubl conjugation pathway</keyword>
<keyword id="KW-0862">Zinc</keyword>
<keyword id="KW-0863">Zinc-finger</keyword>
<feature type="chain" id="PRO_0000056194" description="Probable E3 ubiquitin-protein ligase MID2">
    <location>
        <begin position="1"/>
        <end position="705"/>
    </location>
</feature>
<feature type="domain" description="COS" evidence="8">
    <location>
        <begin position="340"/>
        <end position="399"/>
    </location>
</feature>
<feature type="domain" description="Fibronectin type-III" evidence="6">
    <location>
        <begin position="404"/>
        <end position="504"/>
    </location>
</feature>
<feature type="domain" description="B30.2/SPRY" evidence="7">
    <location>
        <begin position="486"/>
        <end position="679"/>
    </location>
</feature>
<feature type="zinc finger region" description="RING-type" evidence="5">
    <location>
        <begin position="30"/>
        <end position="80"/>
    </location>
</feature>
<feature type="zinc finger region" description="B box-type 1; degenerate" evidence="4">
    <location>
        <begin position="137"/>
        <end position="184"/>
    </location>
</feature>
<feature type="zinc finger region" description="B box-type 2" evidence="4">
    <location>
        <begin position="190"/>
        <end position="232"/>
    </location>
</feature>
<feature type="coiled-coil region" evidence="3">
    <location>
        <begin position="233"/>
        <end position="301"/>
    </location>
</feature>
<feature type="binding site" evidence="4">
    <location>
        <position position="195"/>
    </location>
    <ligand>
        <name>Zn(2+)</name>
        <dbReference type="ChEBI" id="CHEBI:29105"/>
    </ligand>
</feature>
<feature type="binding site" evidence="4">
    <location>
        <position position="198"/>
    </location>
    <ligand>
        <name>Zn(2+)</name>
        <dbReference type="ChEBI" id="CHEBI:29105"/>
    </ligand>
</feature>
<feature type="binding site" evidence="4">
    <location>
        <position position="218"/>
    </location>
    <ligand>
        <name>Zn(2+)</name>
        <dbReference type="ChEBI" id="CHEBI:29105"/>
    </ligand>
</feature>
<feature type="binding site" evidence="4">
    <location>
        <position position="224"/>
    </location>
    <ligand>
        <name>Zn(2+)</name>
        <dbReference type="ChEBI" id="CHEBI:29105"/>
    </ligand>
</feature>
<evidence type="ECO:0000250" key="1"/>
<evidence type="ECO:0000250" key="2">
    <source>
        <dbReference type="UniProtKB" id="Q9UJV3"/>
    </source>
</evidence>
<evidence type="ECO:0000255" key="3"/>
<evidence type="ECO:0000255" key="4">
    <source>
        <dbReference type="PROSITE-ProRule" id="PRU00024"/>
    </source>
</evidence>
<evidence type="ECO:0000255" key="5">
    <source>
        <dbReference type="PROSITE-ProRule" id="PRU00175"/>
    </source>
</evidence>
<evidence type="ECO:0000255" key="6">
    <source>
        <dbReference type="PROSITE-ProRule" id="PRU00316"/>
    </source>
</evidence>
<evidence type="ECO:0000255" key="7">
    <source>
        <dbReference type="PROSITE-ProRule" id="PRU00548"/>
    </source>
</evidence>
<evidence type="ECO:0000255" key="8">
    <source>
        <dbReference type="PROSITE-ProRule" id="PRU00586"/>
    </source>
</evidence>
<evidence type="ECO:0000305" key="9"/>
<sequence length="705" mass="79774">MGESPASAVLNASAGLFSLKMETLESELTCPICLELFEDPLLLPCAHSLCFSCAHRILVSSCSSGESIEPITAFQCPTCRYVISLNHRGLDGLKRNVTLQNIIDRFQKASVSGPNSPSESRRERTYRPSSAMSSERIACQFCEQDPPRDAVKTCITCEVSYCDRCLRATHPNKKPFTSHRLVEPVSDTHLRGITCLDHENEKVNMYCVSDDQLICALCKLVGRHRDHQVASLNDRFEKLKQTLEMNLTNLVKRNSELENQMAKLIQICQQVEVNTAMHEAKLMEECDELVEIIQQRKQMIAVKIKETKVMKLRKLAQQVANCRQCLERSTVLINQAEHILKENDQARFLQSAKNIAERVAMATASSQVLIPDINFNDAFENFALDFSREKKLLEGLDYLTAPNPPSIREELCTASHDTITVHWISDDEFSISSYELQYTIFTGQANFISLYNSVDSWMIVPNIKQNHYTVHGLQSGTRYIFIVKAINQAGSRNSEPTRLKTNSQPFKLDPKMTHKKLKISNDGLQMEKDESSLKKSHTPERFSGTGCYGAAGNIFIDSGCHYWEVVMGSSTWYAIGIAYKSAPKNEWIGKNASSWVFSRCNSNFVVRHNNKEMLVDVPPQLKRLGVLLDYDNNMLSFYDPANSLHLHTFDVTFILPVCPTFTIWNKSLMILSGLPAPDFIDYPERQECNCRPQESPYVSGMKACH</sequence>
<reference key="1">
    <citation type="journal article" date="1999" name="Hum. Mol. Genet.">
        <title>MID2, a homologue of the Opitz syndrome gene MID1: similarities in a sub-cellular localization and differences in expression during development.</title>
        <authorList>
            <person name="Buchner G."/>
            <person name="Montini E."/>
            <person name="Andolfi G."/>
            <person name="Quaderi N."/>
            <person name="Cainarca S."/>
            <person name="Messali S."/>
            <person name="Bassi M.T."/>
            <person name="Ballabio A."/>
            <person name="Meroni G."/>
            <person name="Franco B."/>
        </authorList>
    </citation>
    <scope>NUCLEOTIDE SEQUENCE [MRNA]</scope>
</reference>
<reference key="2">
    <citation type="journal article" date="1999" name="Genomics">
        <title>FXY2/MID2, a gene related to the X-linked Opitz syndrome gene FXY/MID1, maps to Xq22 and encodes a FNIII domain-containing protein that associates with microtubules.</title>
        <authorList>
            <person name="Perry J."/>
            <person name="Short K.M."/>
            <person name="Romer J.T."/>
            <person name="Swift S."/>
            <person name="Cox T.C."/>
            <person name="Ashworth A."/>
        </authorList>
    </citation>
    <scope>NUCLEOTIDE SEQUENCE [MRNA] OF 13-705</scope>
</reference>
<accession>Q9QUS6</accession>
<dbReference type="EC" id="2.3.2.27"/>
<dbReference type="EMBL" id="Y18881">
    <property type="protein sequence ID" value="CAB56170.1"/>
    <property type="status" value="ALT_INIT"/>
    <property type="molecule type" value="mRNA"/>
</dbReference>
<dbReference type="EMBL" id="AF196480">
    <property type="protein sequence ID" value="AAF07340.1"/>
    <property type="status" value="ALT_INIT"/>
    <property type="molecule type" value="mRNA"/>
</dbReference>
<dbReference type="RefSeq" id="NP_001345295.1">
    <property type="nucleotide sequence ID" value="NM_001358366.2"/>
</dbReference>
<dbReference type="RefSeq" id="NP_035975.1">
    <property type="nucleotide sequence ID" value="NM_011845.2"/>
</dbReference>
<dbReference type="RefSeq" id="XP_006528586.1">
    <property type="nucleotide sequence ID" value="XM_006528523.3"/>
</dbReference>
<dbReference type="RefSeq" id="XP_017173971.1">
    <property type="nucleotide sequence ID" value="XM_017318482.1"/>
</dbReference>
<dbReference type="BMRB" id="Q9QUS6"/>
<dbReference type="BioGRID" id="204810">
    <property type="interactions" value="1"/>
</dbReference>
<dbReference type="FunCoup" id="Q9QUS6">
    <property type="interactions" value="38"/>
</dbReference>
<dbReference type="STRING" id="10090.ENSMUSP00000108617"/>
<dbReference type="GlyGen" id="Q9QUS6">
    <property type="glycosylation" value="2 sites, 2 N-linked glycans (2 sites)"/>
</dbReference>
<dbReference type="iPTMnet" id="Q9QUS6"/>
<dbReference type="PhosphoSitePlus" id="Q9QUS6"/>
<dbReference type="PaxDb" id="10090-ENSMUSP00000108612"/>
<dbReference type="ProteomicsDB" id="298225"/>
<dbReference type="DNASU" id="23947"/>
<dbReference type="GeneID" id="23947"/>
<dbReference type="KEGG" id="mmu:23947"/>
<dbReference type="UCSC" id="uc009uld.1">
    <property type="organism name" value="mouse"/>
</dbReference>
<dbReference type="AGR" id="MGI:1344333"/>
<dbReference type="CTD" id="11043"/>
<dbReference type="MGI" id="MGI:1344333">
    <property type="gene designation" value="Mid2"/>
</dbReference>
<dbReference type="eggNOG" id="KOG2177">
    <property type="taxonomic scope" value="Eukaryota"/>
</dbReference>
<dbReference type="InParanoid" id="Q9QUS6"/>
<dbReference type="PhylomeDB" id="Q9QUS6"/>
<dbReference type="UniPathway" id="UPA00143"/>
<dbReference type="BioGRID-ORCS" id="23947">
    <property type="hits" value="3 hits in 76 CRISPR screens"/>
</dbReference>
<dbReference type="ChiTaRS" id="Mid2">
    <property type="organism name" value="mouse"/>
</dbReference>
<dbReference type="PRO" id="PR:Q9QUS6"/>
<dbReference type="Proteomes" id="UP000000589">
    <property type="component" value="Unplaced"/>
</dbReference>
<dbReference type="RNAct" id="Q9QUS6">
    <property type="molecule type" value="protein"/>
</dbReference>
<dbReference type="GO" id="GO:0005737">
    <property type="term" value="C:cytoplasm"/>
    <property type="evidence" value="ECO:0007669"/>
    <property type="project" value="UniProtKB-SubCell"/>
</dbReference>
<dbReference type="GO" id="GO:0005874">
    <property type="term" value="C:microtubule"/>
    <property type="evidence" value="ECO:0007669"/>
    <property type="project" value="UniProtKB-KW"/>
</dbReference>
<dbReference type="GO" id="GO:0016740">
    <property type="term" value="F:transferase activity"/>
    <property type="evidence" value="ECO:0007669"/>
    <property type="project" value="UniProtKB-KW"/>
</dbReference>
<dbReference type="GO" id="GO:0008270">
    <property type="term" value="F:zinc ion binding"/>
    <property type="evidence" value="ECO:0007669"/>
    <property type="project" value="UniProtKB-KW"/>
</dbReference>
<dbReference type="GO" id="GO:0010508">
    <property type="term" value="P:positive regulation of autophagy"/>
    <property type="evidence" value="ECO:0000250"/>
    <property type="project" value="UniProtKB"/>
</dbReference>
<dbReference type="GO" id="GO:0016567">
    <property type="term" value="P:protein ubiquitination"/>
    <property type="evidence" value="ECO:0007669"/>
    <property type="project" value="UniProtKB-UniPathway"/>
</dbReference>
<dbReference type="CDD" id="cd19837">
    <property type="entry name" value="Bbox1_MID2_C-I"/>
    <property type="match status" value="1"/>
</dbReference>
<dbReference type="CDD" id="cd19823">
    <property type="entry name" value="Bbox2_MID2_C-I"/>
    <property type="match status" value="1"/>
</dbReference>
<dbReference type="CDD" id="cd00063">
    <property type="entry name" value="FN3"/>
    <property type="match status" value="1"/>
</dbReference>
<dbReference type="CDD" id="cd16754">
    <property type="entry name" value="RING-HC_MID2"/>
    <property type="match status" value="1"/>
</dbReference>
<dbReference type="CDD" id="cd13739">
    <property type="entry name" value="SPRY_PRY_TRIM1"/>
    <property type="match status" value="1"/>
</dbReference>
<dbReference type="FunFam" id="2.60.120.920:FF:000010">
    <property type="entry name" value="E3 ubiquitin-protein ligase Midline-1"/>
    <property type="match status" value="1"/>
</dbReference>
<dbReference type="FunFam" id="2.60.40.10:FF:000153">
    <property type="entry name" value="Probable E3 ubiquitin-protein ligase MID2"/>
    <property type="match status" value="1"/>
</dbReference>
<dbReference type="FunFam" id="3.30.40.10:FF:000014">
    <property type="entry name" value="probable E3 ubiquitin-protein ligase MID2"/>
    <property type="match status" value="1"/>
</dbReference>
<dbReference type="FunFam" id="4.10.830.40:FF:000002">
    <property type="entry name" value="probable E3 ubiquitin-protein ligase MID2"/>
    <property type="match status" value="1"/>
</dbReference>
<dbReference type="Gene3D" id="2.60.120.920">
    <property type="match status" value="1"/>
</dbReference>
<dbReference type="Gene3D" id="4.10.830.40">
    <property type="match status" value="1"/>
</dbReference>
<dbReference type="Gene3D" id="3.30.160.60">
    <property type="entry name" value="Classic Zinc Finger"/>
    <property type="match status" value="1"/>
</dbReference>
<dbReference type="Gene3D" id="2.60.40.10">
    <property type="entry name" value="Immunoglobulins"/>
    <property type="match status" value="1"/>
</dbReference>
<dbReference type="Gene3D" id="3.30.40.10">
    <property type="entry name" value="Zinc/RING finger domain, C3HC4 (zinc finger)"/>
    <property type="match status" value="1"/>
</dbReference>
<dbReference type="InterPro" id="IPR001870">
    <property type="entry name" value="B30.2/SPRY"/>
</dbReference>
<dbReference type="InterPro" id="IPR043136">
    <property type="entry name" value="B30.2/SPRY_sf"/>
</dbReference>
<dbReference type="InterPro" id="IPR003649">
    <property type="entry name" value="Bbox_C"/>
</dbReference>
<dbReference type="InterPro" id="IPR003879">
    <property type="entry name" value="Butyrophylin_SPRY"/>
</dbReference>
<dbReference type="InterPro" id="IPR013320">
    <property type="entry name" value="ConA-like_dom_sf"/>
</dbReference>
<dbReference type="InterPro" id="IPR017903">
    <property type="entry name" value="COS_domain"/>
</dbReference>
<dbReference type="InterPro" id="IPR050617">
    <property type="entry name" value="E3_ligase_FN3/SPRY"/>
</dbReference>
<dbReference type="InterPro" id="IPR003961">
    <property type="entry name" value="FN3_dom"/>
</dbReference>
<dbReference type="InterPro" id="IPR036116">
    <property type="entry name" value="FN3_sf"/>
</dbReference>
<dbReference type="InterPro" id="IPR013783">
    <property type="entry name" value="Ig-like_fold"/>
</dbReference>
<dbReference type="InterPro" id="IPR047064">
    <property type="entry name" value="MID2_Bbox1_Zfn"/>
</dbReference>
<dbReference type="InterPro" id="IPR047063">
    <property type="entry name" value="MID2_Bbox2_Zfn"/>
</dbReference>
<dbReference type="InterPro" id="IPR033491">
    <property type="entry name" value="MID2_HC-RING"/>
</dbReference>
<dbReference type="InterPro" id="IPR040859">
    <property type="entry name" value="Midline-1_COS"/>
</dbReference>
<dbReference type="InterPro" id="IPR035752">
    <property type="entry name" value="SPRY/PRY_TRIM1"/>
</dbReference>
<dbReference type="InterPro" id="IPR003877">
    <property type="entry name" value="SPRY_dom"/>
</dbReference>
<dbReference type="InterPro" id="IPR027370">
    <property type="entry name" value="Znf-RING_euk"/>
</dbReference>
<dbReference type="InterPro" id="IPR000315">
    <property type="entry name" value="Znf_B-box"/>
</dbReference>
<dbReference type="InterPro" id="IPR001841">
    <property type="entry name" value="Znf_RING"/>
</dbReference>
<dbReference type="InterPro" id="IPR013083">
    <property type="entry name" value="Znf_RING/FYVE/PHD"/>
</dbReference>
<dbReference type="InterPro" id="IPR017907">
    <property type="entry name" value="Znf_RING_CS"/>
</dbReference>
<dbReference type="PANTHER" id="PTHR24099:SF12">
    <property type="entry name" value="E3 UBIQUITIN-PROTEIN LIGASE MID2-RELATED"/>
    <property type="match status" value="1"/>
</dbReference>
<dbReference type="PANTHER" id="PTHR24099">
    <property type="entry name" value="E3 UBIQUITIN-PROTEIN LIGASE TRIM36-RELATED"/>
    <property type="match status" value="1"/>
</dbReference>
<dbReference type="Pfam" id="PF22586">
    <property type="entry name" value="ANCHR-like_BBOX"/>
    <property type="match status" value="1"/>
</dbReference>
<dbReference type="Pfam" id="PF18568">
    <property type="entry name" value="COS"/>
    <property type="match status" value="1"/>
</dbReference>
<dbReference type="Pfam" id="PF00041">
    <property type="entry name" value="fn3"/>
    <property type="match status" value="1"/>
</dbReference>
<dbReference type="Pfam" id="PF00622">
    <property type="entry name" value="SPRY"/>
    <property type="match status" value="1"/>
</dbReference>
<dbReference type="Pfam" id="PF00643">
    <property type="entry name" value="zf-B_box"/>
    <property type="match status" value="1"/>
</dbReference>
<dbReference type="Pfam" id="PF13445">
    <property type="entry name" value="zf-RING_UBOX"/>
    <property type="match status" value="1"/>
</dbReference>
<dbReference type="PRINTS" id="PR01407">
    <property type="entry name" value="BUTYPHLNCDUF"/>
</dbReference>
<dbReference type="SMART" id="SM00502">
    <property type="entry name" value="BBC"/>
    <property type="match status" value="1"/>
</dbReference>
<dbReference type="SMART" id="SM00336">
    <property type="entry name" value="BBOX"/>
    <property type="match status" value="2"/>
</dbReference>
<dbReference type="SMART" id="SM00060">
    <property type="entry name" value="FN3"/>
    <property type="match status" value="1"/>
</dbReference>
<dbReference type="SMART" id="SM00184">
    <property type="entry name" value="RING"/>
    <property type="match status" value="1"/>
</dbReference>
<dbReference type="SMART" id="SM00449">
    <property type="entry name" value="SPRY"/>
    <property type="match status" value="1"/>
</dbReference>
<dbReference type="SUPFAM" id="SSF57845">
    <property type="entry name" value="B-box zinc-binding domain"/>
    <property type="match status" value="1"/>
</dbReference>
<dbReference type="SUPFAM" id="SSF49899">
    <property type="entry name" value="Concanavalin A-like lectins/glucanases"/>
    <property type="match status" value="1"/>
</dbReference>
<dbReference type="SUPFAM" id="SSF49265">
    <property type="entry name" value="Fibronectin type III"/>
    <property type="match status" value="1"/>
</dbReference>
<dbReference type="SUPFAM" id="SSF57850">
    <property type="entry name" value="RING/U-box"/>
    <property type="match status" value="1"/>
</dbReference>
<dbReference type="PROSITE" id="PS50188">
    <property type="entry name" value="B302_SPRY"/>
    <property type="match status" value="1"/>
</dbReference>
<dbReference type="PROSITE" id="PS51262">
    <property type="entry name" value="COS"/>
    <property type="match status" value="1"/>
</dbReference>
<dbReference type="PROSITE" id="PS50853">
    <property type="entry name" value="FN3"/>
    <property type="match status" value="1"/>
</dbReference>
<dbReference type="PROSITE" id="PS50119">
    <property type="entry name" value="ZF_BBOX"/>
    <property type="match status" value="1"/>
</dbReference>
<dbReference type="PROSITE" id="PS00518">
    <property type="entry name" value="ZF_RING_1"/>
    <property type="match status" value="1"/>
</dbReference>
<dbReference type="PROSITE" id="PS50089">
    <property type="entry name" value="ZF_RING_2"/>
    <property type="match status" value="1"/>
</dbReference>
<name>TRIM1_MOUSE</name>
<gene>
    <name type="primary">Mid2</name>
    <name type="synonym">Fxy2</name>
    <name type="synonym">Trim1</name>
</gene>
<protein>
    <recommendedName>
        <fullName>Probable E3 ubiquitin-protein ligase MID2</fullName>
        <ecNumber>2.3.2.27</ecNumber>
    </recommendedName>
    <alternativeName>
        <fullName>Midline defect 2</fullName>
    </alternativeName>
    <alternativeName>
        <fullName>Midline-2</fullName>
    </alternativeName>
    <alternativeName>
        <fullName evidence="9">RING-type E3 ubiquitin transferase MID2</fullName>
    </alternativeName>
    <alternativeName>
        <fullName>Tripartite motif-containing protein 1</fullName>
    </alternativeName>
</protein>
<comment type="function">
    <text evidence="2">E3 ubiquitin ligase that plays a role in microtubule stabilization. Mediates the 'Lys-48'-linked polyubiquitination of LRRK2 to drive its localization to microtubules and its proteasomal degradation in neurons. This ubiquitination inhibits LRRK2 kinase activation by RAB29.</text>
</comment>
<comment type="catalytic activity">
    <reaction evidence="2">
        <text>S-ubiquitinyl-[E2 ubiquitin-conjugating enzyme]-L-cysteine + [acceptor protein]-L-lysine = [E2 ubiquitin-conjugating enzyme]-L-cysteine + N(6)-ubiquitinyl-[acceptor protein]-L-lysine.</text>
        <dbReference type="EC" id="2.3.2.27"/>
    </reaction>
</comment>
<comment type="pathway">
    <text>Protein modification; protein ubiquitination.</text>
</comment>
<comment type="subunit">
    <text evidence="2">Homodimer or heterodimer with MID1. Interacts with IGBP1.</text>
</comment>
<comment type="subcellular location">
    <subcellularLocation>
        <location evidence="2">Cytoplasm</location>
    </subcellularLocation>
    <subcellularLocation>
        <location evidence="2">Cytoplasm</location>
        <location evidence="2">Cytoskeleton</location>
    </subcellularLocation>
    <text evidence="2">Microtubule-associated.</text>
</comment>
<comment type="tissue specificity">
    <text>Low abundance in brain and lung, with even lower levels in heart, liver, and kidney.</text>
</comment>
<comment type="developmental stage">
    <text>At 10.5 dpc, a very low level is mostly confined to the central nervous system and the developing heart and kidney, while at later stages it is present in other organ systems.</text>
</comment>
<comment type="domain">
    <text evidence="2">The tripartite motif (RBCC; RING- and B box-type zinc fingers and coiled coil domains) mediates dimerization.</text>
</comment>
<comment type="domain">
    <text>Associates with microtubules in a manner that is dependent on the C-terminal B30.2 domain.</text>
</comment>
<comment type="PTM">
    <text evidence="1">Phosphorylated on serine and threonine residues.</text>
</comment>
<comment type="similarity">
    <text evidence="9">Belongs to the TRIM/RBCC family.</text>
</comment>
<comment type="caution">
    <text evidence="9">It is uncertain whether Met-1 or Met-21 is the initiator.</text>
</comment>
<comment type="sequence caution" evidence="9">
    <conflict type="erroneous initiation">
        <sequence resource="EMBL-CDS" id="AAF07340"/>
    </conflict>
    <text>Truncated N-terminus.</text>
</comment>
<comment type="sequence caution" evidence="9">
    <conflict type="erroneous initiation">
        <sequence resource="EMBL-CDS" id="CAB56170"/>
    </conflict>
    <text>Truncated N-terminus.</text>
</comment>